<name>SYI_BURL3</name>
<organism>
    <name type="scientific">Burkholderia lata (strain ATCC 17760 / DSM 23089 / LMG 22485 / NCIMB 9086 / R18194 / 383)</name>
    <dbReference type="NCBI Taxonomy" id="482957"/>
    <lineage>
        <taxon>Bacteria</taxon>
        <taxon>Pseudomonadati</taxon>
        <taxon>Pseudomonadota</taxon>
        <taxon>Betaproteobacteria</taxon>
        <taxon>Burkholderiales</taxon>
        <taxon>Burkholderiaceae</taxon>
        <taxon>Burkholderia</taxon>
        <taxon>Burkholderia cepacia complex</taxon>
    </lineage>
</organism>
<reference key="1">
    <citation type="submission" date="2005-10" db="EMBL/GenBank/DDBJ databases">
        <title>Complete sequence of chromosome 1 of Burkholderia sp. 383.</title>
        <authorList>
            <consortium name="US DOE Joint Genome Institute"/>
            <person name="Copeland A."/>
            <person name="Lucas S."/>
            <person name="Lapidus A."/>
            <person name="Barry K."/>
            <person name="Detter J.C."/>
            <person name="Glavina T."/>
            <person name="Hammon N."/>
            <person name="Israni S."/>
            <person name="Pitluck S."/>
            <person name="Chain P."/>
            <person name="Malfatti S."/>
            <person name="Shin M."/>
            <person name="Vergez L."/>
            <person name="Schmutz J."/>
            <person name="Larimer F."/>
            <person name="Land M."/>
            <person name="Kyrpides N."/>
            <person name="Lykidis A."/>
            <person name="Richardson P."/>
        </authorList>
    </citation>
    <scope>NUCLEOTIDE SEQUENCE [LARGE SCALE GENOMIC DNA]</scope>
    <source>
        <strain>ATCC 17760 / DSM 23089 / LMG 22485 / NCIMB 9086 / R18194 / 383</strain>
    </source>
</reference>
<keyword id="KW-0030">Aminoacyl-tRNA synthetase</keyword>
<keyword id="KW-0067">ATP-binding</keyword>
<keyword id="KW-0963">Cytoplasm</keyword>
<keyword id="KW-0436">Ligase</keyword>
<keyword id="KW-0479">Metal-binding</keyword>
<keyword id="KW-0547">Nucleotide-binding</keyword>
<keyword id="KW-0648">Protein biosynthesis</keyword>
<keyword id="KW-0862">Zinc</keyword>
<feature type="chain" id="PRO_1000022048" description="Isoleucine--tRNA ligase">
    <location>
        <begin position="1"/>
        <end position="945"/>
    </location>
</feature>
<feature type="short sequence motif" description="'HIGH' region">
    <location>
        <begin position="66"/>
        <end position="76"/>
    </location>
</feature>
<feature type="short sequence motif" description="'KMSKS' region">
    <location>
        <begin position="622"/>
        <end position="626"/>
    </location>
</feature>
<feature type="binding site" evidence="1">
    <location>
        <position position="581"/>
    </location>
    <ligand>
        <name>L-isoleucyl-5'-AMP</name>
        <dbReference type="ChEBI" id="CHEBI:178002"/>
    </ligand>
</feature>
<feature type="binding site" evidence="1">
    <location>
        <position position="625"/>
    </location>
    <ligand>
        <name>ATP</name>
        <dbReference type="ChEBI" id="CHEBI:30616"/>
    </ligand>
</feature>
<feature type="binding site" evidence="1">
    <location>
        <position position="908"/>
    </location>
    <ligand>
        <name>Zn(2+)</name>
        <dbReference type="ChEBI" id="CHEBI:29105"/>
    </ligand>
</feature>
<feature type="binding site" evidence="1">
    <location>
        <position position="911"/>
    </location>
    <ligand>
        <name>Zn(2+)</name>
        <dbReference type="ChEBI" id="CHEBI:29105"/>
    </ligand>
</feature>
<feature type="binding site" evidence="1">
    <location>
        <position position="928"/>
    </location>
    <ligand>
        <name>Zn(2+)</name>
        <dbReference type="ChEBI" id="CHEBI:29105"/>
    </ligand>
</feature>
<feature type="binding site" evidence="1">
    <location>
        <position position="931"/>
    </location>
    <ligand>
        <name>Zn(2+)</name>
        <dbReference type="ChEBI" id="CHEBI:29105"/>
    </ligand>
</feature>
<gene>
    <name evidence="1" type="primary">ileS</name>
    <name type="ordered locus">Bcep18194_A5844</name>
</gene>
<protein>
    <recommendedName>
        <fullName evidence="1">Isoleucine--tRNA ligase</fullName>
        <ecNumber evidence="1">6.1.1.5</ecNumber>
    </recommendedName>
    <alternativeName>
        <fullName evidence="1">Isoleucyl-tRNA synthetase</fullName>
        <shortName evidence="1">IleRS</shortName>
    </alternativeName>
</protein>
<comment type="function">
    <text evidence="1">Catalyzes the attachment of isoleucine to tRNA(Ile). As IleRS can inadvertently accommodate and process structurally similar amino acids such as valine, to avoid such errors it has two additional distinct tRNA(Ile)-dependent editing activities. One activity is designated as 'pretransfer' editing and involves the hydrolysis of activated Val-AMP. The other activity is designated 'posttransfer' editing and involves deacylation of mischarged Val-tRNA(Ile).</text>
</comment>
<comment type="catalytic activity">
    <reaction evidence="1">
        <text>tRNA(Ile) + L-isoleucine + ATP = L-isoleucyl-tRNA(Ile) + AMP + diphosphate</text>
        <dbReference type="Rhea" id="RHEA:11060"/>
        <dbReference type="Rhea" id="RHEA-COMP:9666"/>
        <dbReference type="Rhea" id="RHEA-COMP:9695"/>
        <dbReference type="ChEBI" id="CHEBI:30616"/>
        <dbReference type="ChEBI" id="CHEBI:33019"/>
        <dbReference type="ChEBI" id="CHEBI:58045"/>
        <dbReference type="ChEBI" id="CHEBI:78442"/>
        <dbReference type="ChEBI" id="CHEBI:78528"/>
        <dbReference type="ChEBI" id="CHEBI:456215"/>
        <dbReference type="EC" id="6.1.1.5"/>
    </reaction>
</comment>
<comment type="cofactor">
    <cofactor evidence="1">
        <name>Zn(2+)</name>
        <dbReference type="ChEBI" id="CHEBI:29105"/>
    </cofactor>
    <text evidence="1">Binds 1 zinc ion per subunit.</text>
</comment>
<comment type="subunit">
    <text evidence="1">Monomer.</text>
</comment>
<comment type="subcellular location">
    <subcellularLocation>
        <location evidence="1">Cytoplasm</location>
    </subcellularLocation>
</comment>
<comment type="domain">
    <text evidence="1">IleRS has two distinct active sites: one for aminoacylation and one for editing. The misactivated valine is translocated from the active site to the editing site, which sterically excludes the correctly activated isoleucine. The single editing site contains two valyl binding pockets, one specific for each substrate (Val-AMP or Val-tRNA(Ile)).</text>
</comment>
<comment type="similarity">
    <text evidence="1">Belongs to the class-I aminoacyl-tRNA synthetase family. IleS type 1 subfamily.</text>
</comment>
<proteinExistence type="inferred from homology"/>
<evidence type="ECO:0000255" key="1">
    <source>
        <dbReference type="HAMAP-Rule" id="MF_02002"/>
    </source>
</evidence>
<dbReference type="EC" id="6.1.1.5" evidence="1"/>
<dbReference type="EMBL" id="CP000151">
    <property type="protein sequence ID" value="ABB09438.1"/>
    <property type="molecule type" value="Genomic_DNA"/>
</dbReference>
<dbReference type="RefSeq" id="WP_011352960.1">
    <property type="nucleotide sequence ID" value="NC_007510.1"/>
</dbReference>
<dbReference type="SMR" id="Q39DM8"/>
<dbReference type="GeneID" id="45095729"/>
<dbReference type="KEGG" id="bur:Bcep18194_A5844"/>
<dbReference type="PATRIC" id="fig|482957.22.peg.2831"/>
<dbReference type="HOGENOM" id="CLU_001493_7_1_4"/>
<dbReference type="Proteomes" id="UP000002705">
    <property type="component" value="Chromosome 1"/>
</dbReference>
<dbReference type="GO" id="GO:0005829">
    <property type="term" value="C:cytosol"/>
    <property type="evidence" value="ECO:0007669"/>
    <property type="project" value="TreeGrafter"/>
</dbReference>
<dbReference type="GO" id="GO:0002161">
    <property type="term" value="F:aminoacyl-tRNA deacylase activity"/>
    <property type="evidence" value="ECO:0007669"/>
    <property type="project" value="InterPro"/>
</dbReference>
<dbReference type="GO" id="GO:0005524">
    <property type="term" value="F:ATP binding"/>
    <property type="evidence" value="ECO:0007669"/>
    <property type="project" value="UniProtKB-UniRule"/>
</dbReference>
<dbReference type="GO" id="GO:0004822">
    <property type="term" value="F:isoleucine-tRNA ligase activity"/>
    <property type="evidence" value="ECO:0007669"/>
    <property type="project" value="UniProtKB-UniRule"/>
</dbReference>
<dbReference type="GO" id="GO:0000049">
    <property type="term" value="F:tRNA binding"/>
    <property type="evidence" value="ECO:0007669"/>
    <property type="project" value="InterPro"/>
</dbReference>
<dbReference type="GO" id="GO:0008270">
    <property type="term" value="F:zinc ion binding"/>
    <property type="evidence" value="ECO:0007669"/>
    <property type="project" value="UniProtKB-UniRule"/>
</dbReference>
<dbReference type="GO" id="GO:0006428">
    <property type="term" value="P:isoleucyl-tRNA aminoacylation"/>
    <property type="evidence" value="ECO:0007669"/>
    <property type="project" value="UniProtKB-UniRule"/>
</dbReference>
<dbReference type="CDD" id="cd07960">
    <property type="entry name" value="Anticodon_Ia_Ile_BEm"/>
    <property type="match status" value="1"/>
</dbReference>
<dbReference type="CDD" id="cd00818">
    <property type="entry name" value="IleRS_core"/>
    <property type="match status" value="1"/>
</dbReference>
<dbReference type="FunFam" id="1.10.730.20:FF:000001">
    <property type="entry name" value="Isoleucine--tRNA ligase"/>
    <property type="match status" value="1"/>
</dbReference>
<dbReference type="FunFam" id="3.40.50.620:FF:000042">
    <property type="entry name" value="Isoleucine--tRNA ligase"/>
    <property type="match status" value="1"/>
</dbReference>
<dbReference type="FunFam" id="3.40.50.620:FF:000048">
    <property type="entry name" value="Isoleucine--tRNA ligase"/>
    <property type="match status" value="1"/>
</dbReference>
<dbReference type="Gene3D" id="1.10.730.20">
    <property type="match status" value="1"/>
</dbReference>
<dbReference type="Gene3D" id="3.40.50.620">
    <property type="entry name" value="HUPs"/>
    <property type="match status" value="2"/>
</dbReference>
<dbReference type="Gene3D" id="3.90.740.10">
    <property type="entry name" value="Valyl/Leucyl/Isoleucyl-tRNA synthetase, editing domain"/>
    <property type="match status" value="1"/>
</dbReference>
<dbReference type="HAMAP" id="MF_02002">
    <property type="entry name" value="Ile_tRNA_synth_type1"/>
    <property type="match status" value="1"/>
</dbReference>
<dbReference type="InterPro" id="IPR001412">
    <property type="entry name" value="aa-tRNA-synth_I_CS"/>
</dbReference>
<dbReference type="InterPro" id="IPR002300">
    <property type="entry name" value="aa-tRNA-synth_Ia"/>
</dbReference>
<dbReference type="InterPro" id="IPR033708">
    <property type="entry name" value="Anticodon_Ile_BEm"/>
</dbReference>
<dbReference type="InterPro" id="IPR002301">
    <property type="entry name" value="Ile-tRNA-ligase"/>
</dbReference>
<dbReference type="InterPro" id="IPR023585">
    <property type="entry name" value="Ile-tRNA-ligase_type1"/>
</dbReference>
<dbReference type="InterPro" id="IPR050081">
    <property type="entry name" value="Ile-tRNA_ligase"/>
</dbReference>
<dbReference type="InterPro" id="IPR013155">
    <property type="entry name" value="M/V/L/I-tRNA-synth_anticd-bd"/>
</dbReference>
<dbReference type="InterPro" id="IPR014729">
    <property type="entry name" value="Rossmann-like_a/b/a_fold"/>
</dbReference>
<dbReference type="InterPro" id="IPR009080">
    <property type="entry name" value="tRNAsynth_Ia_anticodon-bd"/>
</dbReference>
<dbReference type="InterPro" id="IPR009008">
    <property type="entry name" value="Val/Leu/Ile-tRNA-synth_edit"/>
</dbReference>
<dbReference type="InterPro" id="IPR010663">
    <property type="entry name" value="Znf_FPG/IleRS"/>
</dbReference>
<dbReference type="NCBIfam" id="TIGR00392">
    <property type="entry name" value="ileS"/>
    <property type="match status" value="1"/>
</dbReference>
<dbReference type="PANTHER" id="PTHR42765:SF1">
    <property type="entry name" value="ISOLEUCINE--TRNA LIGASE, MITOCHONDRIAL"/>
    <property type="match status" value="1"/>
</dbReference>
<dbReference type="PANTHER" id="PTHR42765">
    <property type="entry name" value="SOLEUCYL-TRNA SYNTHETASE"/>
    <property type="match status" value="1"/>
</dbReference>
<dbReference type="Pfam" id="PF08264">
    <property type="entry name" value="Anticodon_1"/>
    <property type="match status" value="1"/>
</dbReference>
<dbReference type="Pfam" id="PF00133">
    <property type="entry name" value="tRNA-synt_1"/>
    <property type="match status" value="1"/>
</dbReference>
<dbReference type="Pfam" id="PF06827">
    <property type="entry name" value="zf-FPG_IleRS"/>
    <property type="match status" value="1"/>
</dbReference>
<dbReference type="PRINTS" id="PR00984">
    <property type="entry name" value="TRNASYNTHILE"/>
</dbReference>
<dbReference type="SUPFAM" id="SSF47323">
    <property type="entry name" value="Anticodon-binding domain of a subclass of class I aminoacyl-tRNA synthetases"/>
    <property type="match status" value="1"/>
</dbReference>
<dbReference type="SUPFAM" id="SSF52374">
    <property type="entry name" value="Nucleotidylyl transferase"/>
    <property type="match status" value="1"/>
</dbReference>
<dbReference type="SUPFAM" id="SSF50677">
    <property type="entry name" value="ValRS/IleRS/LeuRS editing domain"/>
    <property type="match status" value="1"/>
</dbReference>
<dbReference type="PROSITE" id="PS00178">
    <property type="entry name" value="AA_TRNA_LIGASE_I"/>
    <property type="match status" value="1"/>
</dbReference>
<sequence length="945" mass="105866">MSNKKADSKPQAKYPVNLLDTPFPMRGDLPKREPQWVKEWEERGIYEKIRAASAGRPKFILHDGPPYANGDIHLGHAVNKILKDIVVKSRNMAGFDAPYVPGWDCHGMPIEIQIEKQFGKSLPAAEVMSKARAYATEQIEKQKVGFKRLGVLGDWANPYKTMNFVNEAEELRALGKIIEKGYVYRGLKPVNWCFDCGSALAEAEVEYKDRTDPTIDVMFAFAEPEKTAQAFGLPALPRAEGGIVIWTTTPWTIPANQALNLHPEIVYALVDTERGLLIIAEERVEACMTDFKLTGRVVATAPGVKLAGLRFHHPLASAHPGYKRTAPVYLGDYVTTDTGTGVVHSSPAYGIEDFVSCKAHGMTDSDFINPVMGDGRYIESLPLFGGLSIWDANPKIVEALNAAGSLLRSEKYTHSYMHCWRHKTPIIYRATSQWFAGMDVTPRDGGKTLRETALEGVDATAFYPSWGKQRLFSMIANRPDWTLSRQRQWGVPMAFFVHKETGELHPRTLELLEEVAKRVEQSGIEAWQTLDPRELIGDDANLYEKNRDTLDVWFDSGTTHWHVLRGSHKDQLQFPADLYLEGSDQHRGWFHSSLLTASMIDGRAPYKGLLTHGFTVDGEGRKMSKSLGNGIDPHEVANRLGAEIIRLWIASTDYSGELAISEEILKRVTEGYRRIRNTLRFLLANLSDFDFAQHAVPVDEWLEIDRYAVAFSQQLQTELLGHYEKYEFHPVVAKLQTYCSEDLGGFYLDVLKDRLYTSAADSRARRSAQTALYHLTHGLLRVLAPFLSFTAEEAWKVFQPASDTIYTETYYAYPEVAGSAALIEKWALLRDVRGNVTKALEEARTANRIGSSLQAEVAVHASGARYDALTSLGDDLKFVLITSAATVVKVDDEAQESVDVAASKYQKCERCWHYREDVGAHADHPTLCGRCFSNLFENGEIRSAA</sequence>
<accession>Q39DM8</accession>